<keyword id="KW-1003">Cell membrane</keyword>
<keyword id="KW-0472">Membrane</keyword>
<keyword id="KW-0812">Transmembrane</keyword>
<keyword id="KW-1133">Transmembrane helix</keyword>
<feature type="chain" id="PRO_1000146756" description="Protein AaeX">
    <location>
        <begin position="1"/>
        <end position="67"/>
    </location>
</feature>
<feature type="transmembrane region" description="Helical" evidence="1">
    <location>
        <begin position="3"/>
        <end position="23"/>
    </location>
</feature>
<feature type="transmembrane region" description="Helical" evidence="1">
    <location>
        <begin position="43"/>
        <end position="63"/>
    </location>
</feature>
<gene>
    <name evidence="1" type="primary">aaeX</name>
    <name type="ordered locus">ECUMN_3716</name>
</gene>
<proteinExistence type="inferred from homology"/>
<name>AAEX_ECOLU</name>
<reference key="1">
    <citation type="journal article" date="2009" name="PLoS Genet.">
        <title>Organised genome dynamics in the Escherichia coli species results in highly diverse adaptive paths.</title>
        <authorList>
            <person name="Touchon M."/>
            <person name="Hoede C."/>
            <person name="Tenaillon O."/>
            <person name="Barbe V."/>
            <person name="Baeriswyl S."/>
            <person name="Bidet P."/>
            <person name="Bingen E."/>
            <person name="Bonacorsi S."/>
            <person name="Bouchier C."/>
            <person name="Bouvet O."/>
            <person name="Calteau A."/>
            <person name="Chiapello H."/>
            <person name="Clermont O."/>
            <person name="Cruveiller S."/>
            <person name="Danchin A."/>
            <person name="Diard M."/>
            <person name="Dossat C."/>
            <person name="Karoui M.E."/>
            <person name="Frapy E."/>
            <person name="Garry L."/>
            <person name="Ghigo J.M."/>
            <person name="Gilles A.M."/>
            <person name="Johnson J."/>
            <person name="Le Bouguenec C."/>
            <person name="Lescat M."/>
            <person name="Mangenot S."/>
            <person name="Martinez-Jehanne V."/>
            <person name="Matic I."/>
            <person name="Nassif X."/>
            <person name="Oztas S."/>
            <person name="Petit M.A."/>
            <person name="Pichon C."/>
            <person name="Rouy Z."/>
            <person name="Ruf C.S."/>
            <person name="Schneider D."/>
            <person name="Tourret J."/>
            <person name="Vacherie B."/>
            <person name="Vallenet D."/>
            <person name="Medigue C."/>
            <person name="Rocha E.P.C."/>
            <person name="Denamur E."/>
        </authorList>
    </citation>
    <scope>NUCLEOTIDE SEQUENCE [LARGE SCALE GENOMIC DNA]</scope>
    <source>
        <strain>UMN026 / ExPEC</strain>
    </source>
</reference>
<sequence>MSLFPVIVVFGLSFPPIFFELLLSLAIFWLVRRVLVPTGIYDFVWHPALFNTALYCCLFYLISRLFV</sequence>
<protein>
    <recommendedName>
        <fullName evidence="1">Protein AaeX</fullName>
    </recommendedName>
</protein>
<organism>
    <name type="scientific">Escherichia coli O17:K52:H18 (strain UMN026 / ExPEC)</name>
    <dbReference type="NCBI Taxonomy" id="585056"/>
    <lineage>
        <taxon>Bacteria</taxon>
        <taxon>Pseudomonadati</taxon>
        <taxon>Pseudomonadota</taxon>
        <taxon>Gammaproteobacteria</taxon>
        <taxon>Enterobacterales</taxon>
        <taxon>Enterobacteriaceae</taxon>
        <taxon>Escherichia</taxon>
    </lineage>
</organism>
<accession>B7NDM0</accession>
<dbReference type="EMBL" id="CU928163">
    <property type="protein sequence ID" value="CAR14870.1"/>
    <property type="molecule type" value="Genomic_DNA"/>
</dbReference>
<dbReference type="RefSeq" id="WP_000051841.1">
    <property type="nucleotide sequence ID" value="NC_011751.1"/>
</dbReference>
<dbReference type="RefSeq" id="YP_002414375.1">
    <property type="nucleotide sequence ID" value="NC_011751.1"/>
</dbReference>
<dbReference type="STRING" id="585056.ECUMN_3716"/>
<dbReference type="GeneID" id="93778743"/>
<dbReference type="KEGG" id="eum:ECUMN_3716"/>
<dbReference type="PATRIC" id="fig|585056.7.peg.3899"/>
<dbReference type="HOGENOM" id="CLU_188292_0_0_6"/>
<dbReference type="Proteomes" id="UP000007097">
    <property type="component" value="Chromosome"/>
</dbReference>
<dbReference type="GO" id="GO:0005886">
    <property type="term" value="C:plasma membrane"/>
    <property type="evidence" value="ECO:0007669"/>
    <property type="project" value="UniProtKB-SubCell"/>
</dbReference>
<dbReference type="HAMAP" id="MF_01546">
    <property type="entry name" value="AaeX"/>
    <property type="match status" value="1"/>
</dbReference>
<dbReference type="InterPro" id="IPR012451">
    <property type="entry name" value="DUF1656"/>
</dbReference>
<dbReference type="NCBIfam" id="NF008615">
    <property type="entry name" value="PRK11594.1"/>
    <property type="match status" value="1"/>
</dbReference>
<dbReference type="Pfam" id="PF07869">
    <property type="entry name" value="DUF1656"/>
    <property type="match status" value="1"/>
</dbReference>
<evidence type="ECO:0000255" key="1">
    <source>
        <dbReference type="HAMAP-Rule" id="MF_01546"/>
    </source>
</evidence>
<comment type="subcellular location">
    <subcellularLocation>
        <location evidence="1">Cell membrane</location>
        <topology evidence="1">Multi-pass membrane protein</topology>
    </subcellularLocation>
</comment>
<comment type="induction">
    <text evidence="1">Positively coregulated with aaeA and aaeB by AaeR.</text>
</comment>
<comment type="similarity">
    <text evidence="1">Belongs to the AaeX family.</text>
</comment>